<proteinExistence type="inferred from homology"/>
<protein>
    <recommendedName>
        <fullName evidence="1">3-isopropylmalate dehydratase small subunit</fullName>
        <ecNumber evidence="1">4.2.1.33</ecNumber>
    </recommendedName>
    <alternativeName>
        <fullName evidence="1">Alpha-IPM isomerase</fullName>
        <shortName evidence="1">IPMI</shortName>
    </alternativeName>
    <alternativeName>
        <fullName evidence="1">Isopropylmalate isomerase</fullName>
    </alternativeName>
</protein>
<keyword id="KW-0028">Amino-acid biosynthesis</keyword>
<keyword id="KW-0100">Branched-chain amino acid biosynthesis</keyword>
<keyword id="KW-0432">Leucine biosynthesis</keyword>
<keyword id="KW-0456">Lyase</keyword>
<keyword id="KW-1185">Reference proteome</keyword>
<comment type="function">
    <text evidence="1">Catalyzes the isomerization between 2-isopropylmalate and 3-isopropylmalate, via the formation of 2-isopropylmaleate.</text>
</comment>
<comment type="catalytic activity">
    <reaction evidence="1">
        <text>(2R,3S)-3-isopropylmalate = (2S)-2-isopropylmalate</text>
        <dbReference type="Rhea" id="RHEA:32287"/>
        <dbReference type="ChEBI" id="CHEBI:1178"/>
        <dbReference type="ChEBI" id="CHEBI:35121"/>
        <dbReference type="EC" id="4.2.1.33"/>
    </reaction>
</comment>
<comment type="pathway">
    <text evidence="1">Amino-acid biosynthesis; L-leucine biosynthesis; L-leucine from 3-methyl-2-oxobutanoate: step 2/4.</text>
</comment>
<comment type="subunit">
    <text evidence="1">Heterodimer of LeuC and LeuD.</text>
</comment>
<comment type="similarity">
    <text evidence="1">Belongs to the LeuD family. LeuD type 1 subfamily.</text>
</comment>
<sequence>MKAFTRLDGRAAPLELANIDTDQIIPKQFLKTVEREGLAKGLFYDFRFDADGNEISDFVLNKPEYKSASVLIAGDNFGCGSSREHAPWALMDFGIMCVISTSFADIFNNNCFNNGLLPVVVSPEDLALLMDEAKGGNHMVSVDLEAQTVISPSGKTIGFDIDPVRKEKMLKGLDAIGETMMHGGDIDLFESKRAISQPWLEA</sequence>
<dbReference type="EC" id="4.2.1.33" evidence="1"/>
<dbReference type="EMBL" id="CP001340">
    <property type="protein sequence ID" value="ACL93662.1"/>
    <property type="molecule type" value="Genomic_DNA"/>
</dbReference>
<dbReference type="RefSeq" id="WP_010918084.1">
    <property type="nucleotide sequence ID" value="NC_011916.1"/>
</dbReference>
<dbReference type="RefSeq" id="YP_002515570.1">
    <property type="nucleotide sequence ID" value="NC_011916.1"/>
</dbReference>
<dbReference type="SMR" id="B8GY65"/>
<dbReference type="GeneID" id="7330240"/>
<dbReference type="KEGG" id="ccs:CCNA_00195"/>
<dbReference type="PATRIC" id="fig|565050.3.peg.193"/>
<dbReference type="HOGENOM" id="CLU_081378_0_3_5"/>
<dbReference type="OrthoDB" id="9777465at2"/>
<dbReference type="PhylomeDB" id="B8GY65"/>
<dbReference type="UniPathway" id="UPA00048">
    <property type="reaction ID" value="UER00071"/>
</dbReference>
<dbReference type="Proteomes" id="UP000001364">
    <property type="component" value="Chromosome"/>
</dbReference>
<dbReference type="GO" id="GO:0009316">
    <property type="term" value="C:3-isopropylmalate dehydratase complex"/>
    <property type="evidence" value="ECO:0007669"/>
    <property type="project" value="InterPro"/>
</dbReference>
<dbReference type="GO" id="GO:0003861">
    <property type="term" value="F:3-isopropylmalate dehydratase activity"/>
    <property type="evidence" value="ECO:0007669"/>
    <property type="project" value="UniProtKB-UniRule"/>
</dbReference>
<dbReference type="GO" id="GO:0009098">
    <property type="term" value="P:L-leucine biosynthetic process"/>
    <property type="evidence" value="ECO:0007669"/>
    <property type="project" value="UniProtKB-UniRule"/>
</dbReference>
<dbReference type="CDD" id="cd01577">
    <property type="entry name" value="IPMI_Swivel"/>
    <property type="match status" value="1"/>
</dbReference>
<dbReference type="FunFam" id="3.20.19.10:FF:000003">
    <property type="entry name" value="3-isopropylmalate dehydratase small subunit"/>
    <property type="match status" value="1"/>
</dbReference>
<dbReference type="Gene3D" id="3.20.19.10">
    <property type="entry name" value="Aconitase, domain 4"/>
    <property type="match status" value="1"/>
</dbReference>
<dbReference type="HAMAP" id="MF_01031">
    <property type="entry name" value="LeuD_type1"/>
    <property type="match status" value="1"/>
</dbReference>
<dbReference type="InterPro" id="IPR004431">
    <property type="entry name" value="3-IsopropMal_deHydase_ssu"/>
</dbReference>
<dbReference type="InterPro" id="IPR015928">
    <property type="entry name" value="Aconitase/3IPM_dehydase_swvl"/>
</dbReference>
<dbReference type="InterPro" id="IPR000573">
    <property type="entry name" value="AconitaseA/IPMdHydase_ssu_swvl"/>
</dbReference>
<dbReference type="InterPro" id="IPR033940">
    <property type="entry name" value="IPMI_Swivel"/>
</dbReference>
<dbReference type="InterPro" id="IPR050075">
    <property type="entry name" value="LeuD"/>
</dbReference>
<dbReference type="NCBIfam" id="TIGR00171">
    <property type="entry name" value="leuD"/>
    <property type="match status" value="1"/>
</dbReference>
<dbReference type="NCBIfam" id="NF002458">
    <property type="entry name" value="PRK01641.1"/>
    <property type="match status" value="1"/>
</dbReference>
<dbReference type="PANTHER" id="PTHR43345:SF5">
    <property type="entry name" value="3-ISOPROPYLMALATE DEHYDRATASE SMALL SUBUNIT"/>
    <property type="match status" value="1"/>
</dbReference>
<dbReference type="PANTHER" id="PTHR43345">
    <property type="entry name" value="3-ISOPROPYLMALATE DEHYDRATASE SMALL SUBUNIT 2-RELATED-RELATED"/>
    <property type="match status" value="1"/>
</dbReference>
<dbReference type="Pfam" id="PF00694">
    <property type="entry name" value="Aconitase_C"/>
    <property type="match status" value="1"/>
</dbReference>
<dbReference type="SUPFAM" id="SSF52016">
    <property type="entry name" value="LeuD/IlvD-like"/>
    <property type="match status" value="1"/>
</dbReference>
<reference key="1">
    <citation type="journal article" date="2010" name="J. Bacteriol.">
        <title>The genetic basis of laboratory adaptation in Caulobacter crescentus.</title>
        <authorList>
            <person name="Marks M.E."/>
            <person name="Castro-Rojas C.M."/>
            <person name="Teiling C."/>
            <person name="Du L."/>
            <person name="Kapatral V."/>
            <person name="Walunas T.L."/>
            <person name="Crosson S."/>
        </authorList>
    </citation>
    <scope>NUCLEOTIDE SEQUENCE [LARGE SCALE GENOMIC DNA]</scope>
    <source>
        <strain>NA1000 / CB15N</strain>
    </source>
</reference>
<organism>
    <name type="scientific">Caulobacter vibrioides (strain NA1000 / CB15N)</name>
    <name type="common">Caulobacter crescentus</name>
    <dbReference type="NCBI Taxonomy" id="565050"/>
    <lineage>
        <taxon>Bacteria</taxon>
        <taxon>Pseudomonadati</taxon>
        <taxon>Pseudomonadota</taxon>
        <taxon>Alphaproteobacteria</taxon>
        <taxon>Caulobacterales</taxon>
        <taxon>Caulobacteraceae</taxon>
        <taxon>Caulobacter</taxon>
    </lineage>
</organism>
<accession>B8GY65</accession>
<name>LEUD_CAUVN</name>
<feature type="chain" id="PRO_1000149407" description="3-isopropylmalate dehydratase small subunit">
    <location>
        <begin position="1"/>
        <end position="202"/>
    </location>
</feature>
<gene>
    <name evidence="1" type="primary">leuD</name>
    <name type="ordered locus">CCNA_00195</name>
</gene>
<evidence type="ECO:0000255" key="1">
    <source>
        <dbReference type="HAMAP-Rule" id="MF_01031"/>
    </source>
</evidence>